<reference key="1">
    <citation type="submission" date="2008-02" db="EMBL/GenBank/DDBJ databases">
        <title>Complete sequence of Pseudomonas putida W619.</title>
        <authorList>
            <person name="Copeland A."/>
            <person name="Lucas S."/>
            <person name="Lapidus A."/>
            <person name="Barry K."/>
            <person name="Detter J.C."/>
            <person name="Glavina del Rio T."/>
            <person name="Dalin E."/>
            <person name="Tice H."/>
            <person name="Pitluck S."/>
            <person name="Chain P."/>
            <person name="Malfatti S."/>
            <person name="Shin M."/>
            <person name="Vergez L."/>
            <person name="Schmutz J."/>
            <person name="Larimer F."/>
            <person name="Land M."/>
            <person name="Hauser L."/>
            <person name="Kyrpides N."/>
            <person name="Kim E."/>
            <person name="Taghavi S."/>
            <person name="Vangronsveld D."/>
            <person name="van der Lelie D."/>
            <person name="Richardson P."/>
        </authorList>
    </citation>
    <scope>NUCLEOTIDE SEQUENCE [LARGE SCALE GENOMIC DNA]</scope>
    <source>
        <strain>W619</strain>
    </source>
</reference>
<proteinExistence type="inferred from homology"/>
<accession>B1JD87</accession>
<name>KUP_PSEPW</name>
<feature type="chain" id="PRO_1000190275" description="Probable potassium transport system protein Kup">
    <location>
        <begin position="1"/>
        <end position="632"/>
    </location>
</feature>
<feature type="transmembrane region" description="Helical" evidence="1">
    <location>
        <begin position="20"/>
        <end position="40"/>
    </location>
</feature>
<feature type="transmembrane region" description="Helical" evidence="1">
    <location>
        <begin position="60"/>
        <end position="80"/>
    </location>
</feature>
<feature type="transmembrane region" description="Helical" evidence="1">
    <location>
        <begin position="111"/>
        <end position="131"/>
    </location>
</feature>
<feature type="transmembrane region" description="Helical" evidence="1">
    <location>
        <begin position="146"/>
        <end position="166"/>
    </location>
</feature>
<feature type="transmembrane region" description="Helical" evidence="1">
    <location>
        <begin position="178"/>
        <end position="198"/>
    </location>
</feature>
<feature type="transmembrane region" description="Helical" evidence="1">
    <location>
        <begin position="216"/>
        <end position="236"/>
    </location>
</feature>
<feature type="transmembrane region" description="Helical" evidence="1">
    <location>
        <begin position="257"/>
        <end position="277"/>
    </location>
</feature>
<feature type="transmembrane region" description="Helical" evidence="1">
    <location>
        <begin position="289"/>
        <end position="309"/>
    </location>
</feature>
<feature type="transmembrane region" description="Helical" evidence="1">
    <location>
        <begin position="347"/>
        <end position="367"/>
    </location>
</feature>
<feature type="transmembrane region" description="Helical" evidence="1">
    <location>
        <begin position="379"/>
        <end position="399"/>
    </location>
</feature>
<feature type="transmembrane region" description="Helical" evidence="1">
    <location>
        <begin position="404"/>
        <end position="424"/>
    </location>
</feature>
<feature type="transmembrane region" description="Helical" evidence="1">
    <location>
        <begin position="429"/>
        <end position="449"/>
    </location>
</feature>
<gene>
    <name evidence="1" type="primary">kup</name>
    <name type="ordered locus">PputW619_4015</name>
</gene>
<comment type="function">
    <text evidence="1">Transport of potassium into the cell. Likely operates as a K(+):H(+) symporter.</text>
</comment>
<comment type="catalytic activity">
    <reaction evidence="1">
        <text>K(+)(in) + H(+)(in) = K(+)(out) + H(+)(out)</text>
        <dbReference type="Rhea" id="RHEA:28490"/>
        <dbReference type="ChEBI" id="CHEBI:15378"/>
        <dbReference type="ChEBI" id="CHEBI:29103"/>
    </reaction>
    <physiologicalReaction direction="right-to-left" evidence="1">
        <dbReference type="Rhea" id="RHEA:28492"/>
    </physiologicalReaction>
</comment>
<comment type="subcellular location">
    <subcellularLocation>
        <location evidence="1">Cell inner membrane</location>
        <topology evidence="1">Multi-pass membrane protein</topology>
    </subcellularLocation>
</comment>
<comment type="similarity">
    <text evidence="1">Belongs to the HAK/KUP transporter (TC 2.A.72) family.</text>
</comment>
<sequence length="632" mass="68189">MVQASSHAEGGQGATRSLSLLVAAVGVVYGDIGTSPLYTLKEVFTGGYGVPVNHDGVLGILSLILWSLLWVVSFKYVMFILRADNQGEGGTMALTALARRATAAYPRLRTLMVICGLIGASLFYGDSMITPAVSVLSAVEGMGLAFDGIDHWVVPISLVVLVALFLVQKHGTEKIGKLFGPIMVTWFVVLAALGVHGISQSPEVLKAFNPGWAVNFFIVHPGMGVAILGAVVLALTGAEALYADMGHFGRKPIARAWFALVLPALVLNYFGQGAILLQNPDAARNPFYLLAPGWALLPLVGLATMATVIASQAVISGAFSLTRQAIQLGYIPRMHIQHTSSDEQGQIYIAAVNWTLMVGVVLLVIGFESSGALAAAYGVAVTGTMLMTTILVSAVMLLLWKWPPVLAVPILIGFLLVDGLFFAANVPKIVQGGAFPVLAGGVLFLLMSTWKRGKQILVERIDEGGLPLPVFISSIRIQPPHRVEGTAVFLTARPDAVPHALLHNMLHNQVLHSQVVLLTVVSEDRPRVPEQERFEVEAYGDGFFRVLLHFGFMDEPDVPAALKLCHLDGLDFTPMRTTYFLSRETVIASRLEGMSRWRGNLFAFLLKNANGNLRFFNLPLNRVIELGTQVEI</sequence>
<organism>
    <name type="scientific">Pseudomonas putida (strain W619)</name>
    <dbReference type="NCBI Taxonomy" id="390235"/>
    <lineage>
        <taxon>Bacteria</taxon>
        <taxon>Pseudomonadati</taxon>
        <taxon>Pseudomonadota</taxon>
        <taxon>Gammaproteobacteria</taxon>
        <taxon>Pseudomonadales</taxon>
        <taxon>Pseudomonadaceae</taxon>
        <taxon>Pseudomonas</taxon>
    </lineage>
</organism>
<dbReference type="EMBL" id="CP000949">
    <property type="protein sequence ID" value="ACA74495.1"/>
    <property type="molecule type" value="Genomic_DNA"/>
</dbReference>
<dbReference type="STRING" id="390235.PputW619_4015"/>
<dbReference type="KEGG" id="ppw:PputW619_4015"/>
<dbReference type="eggNOG" id="COG3158">
    <property type="taxonomic scope" value="Bacteria"/>
</dbReference>
<dbReference type="HOGENOM" id="CLU_008142_4_2_6"/>
<dbReference type="OrthoDB" id="9805577at2"/>
<dbReference type="GO" id="GO:0005886">
    <property type="term" value="C:plasma membrane"/>
    <property type="evidence" value="ECO:0007669"/>
    <property type="project" value="UniProtKB-SubCell"/>
</dbReference>
<dbReference type="GO" id="GO:0015079">
    <property type="term" value="F:potassium ion transmembrane transporter activity"/>
    <property type="evidence" value="ECO:0007669"/>
    <property type="project" value="UniProtKB-UniRule"/>
</dbReference>
<dbReference type="GO" id="GO:0015293">
    <property type="term" value="F:symporter activity"/>
    <property type="evidence" value="ECO:0007669"/>
    <property type="project" value="UniProtKB-UniRule"/>
</dbReference>
<dbReference type="HAMAP" id="MF_01522">
    <property type="entry name" value="Kup"/>
    <property type="match status" value="1"/>
</dbReference>
<dbReference type="InterPro" id="IPR003855">
    <property type="entry name" value="K+_transporter"/>
</dbReference>
<dbReference type="InterPro" id="IPR053952">
    <property type="entry name" value="K_trans_C"/>
</dbReference>
<dbReference type="InterPro" id="IPR053951">
    <property type="entry name" value="K_trans_N"/>
</dbReference>
<dbReference type="InterPro" id="IPR023051">
    <property type="entry name" value="Kup"/>
</dbReference>
<dbReference type="PANTHER" id="PTHR30540:SF79">
    <property type="entry name" value="LOW AFFINITY POTASSIUM TRANSPORT SYSTEM PROTEIN KUP"/>
    <property type="match status" value="1"/>
</dbReference>
<dbReference type="PANTHER" id="PTHR30540">
    <property type="entry name" value="OSMOTIC STRESS POTASSIUM TRANSPORTER"/>
    <property type="match status" value="1"/>
</dbReference>
<dbReference type="Pfam" id="PF02705">
    <property type="entry name" value="K_trans"/>
    <property type="match status" value="1"/>
</dbReference>
<dbReference type="Pfam" id="PF22776">
    <property type="entry name" value="K_trans_C"/>
    <property type="match status" value="1"/>
</dbReference>
<evidence type="ECO:0000255" key="1">
    <source>
        <dbReference type="HAMAP-Rule" id="MF_01522"/>
    </source>
</evidence>
<protein>
    <recommendedName>
        <fullName evidence="1">Probable potassium transport system protein Kup</fullName>
    </recommendedName>
</protein>
<keyword id="KW-0997">Cell inner membrane</keyword>
<keyword id="KW-1003">Cell membrane</keyword>
<keyword id="KW-0406">Ion transport</keyword>
<keyword id="KW-0472">Membrane</keyword>
<keyword id="KW-0630">Potassium</keyword>
<keyword id="KW-0633">Potassium transport</keyword>
<keyword id="KW-0769">Symport</keyword>
<keyword id="KW-0812">Transmembrane</keyword>
<keyword id="KW-1133">Transmembrane helix</keyword>
<keyword id="KW-0813">Transport</keyword>